<protein>
    <recommendedName>
        <fullName>Methylcrotonoyl-CoA carboxylase subunit alpha, mitochondrial</fullName>
        <shortName>MCCase subunit alpha</shortName>
        <ecNumber>6.4.1.4</ecNumber>
    </recommendedName>
    <alternativeName>
        <fullName>3-methylcrotonyl-CoA carboxylase 1</fullName>
    </alternativeName>
    <alternativeName>
        <fullName>3-methylcrotonyl-CoA:carbon dioxide ligase subunit alpha</fullName>
    </alternativeName>
</protein>
<gene>
    <name type="primary">MCCA</name>
    <name type="ordered locus">Os12g0605800</name>
    <name type="ordered locus">LOC_Os12g41250</name>
    <name type="ORF">OsJ_36794</name>
</gene>
<dbReference type="EC" id="6.4.1.4"/>
<dbReference type="EMBL" id="DP000011">
    <property type="protein sequence ID" value="ABA99831.2"/>
    <property type="molecule type" value="Genomic_DNA"/>
</dbReference>
<dbReference type="EMBL" id="DP000011">
    <property type="protein sequence ID" value="ABA99832.2"/>
    <property type="status" value="ALT_SEQ"/>
    <property type="molecule type" value="Genomic_DNA"/>
</dbReference>
<dbReference type="EMBL" id="AP008218">
    <property type="protein sequence ID" value="BAF30245.1"/>
    <property type="molecule type" value="Genomic_DNA"/>
</dbReference>
<dbReference type="EMBL" id="AP014968">
    <property type="protein sequence ID" value="BAT17984.1"/>
    <property type="molecule type" value="Genomic_DNA"/>
</dbReference>
<dbReference type="EMBL" id="CM000149">
    <property type="protein sequence ID" value="EEE53566.1"/>
    <property type="molecule type" value="Genomic_DNA"/>
</dbReference>
<dbReference type="EMBL" id="AK121511">
    <property type="protein sequence ID" value="BAH00526.1"/>
    <property type="molecule type" value="mRNA"/>
</dbReference>
<dbReference type="EMBL" id="AF251074">
    <property type="protein sequence ID" value="AAL65397.1"/>
    <property type="molecule type" value="mRNA"/>
</dbReference>
<dbReference type="RefSeq" id="XP_015620588.1">
    <property type="nucleotide sequence ID" value="XM_015765102.1"/>
</dbReference>
<dbReference type="SMR" id="Q2QMG2"/>
<dbReference type="FunCoup" id="Q2QMG2">
    <property type="interactions" value="2196"/>
</dbReference>
<dbReference type="STRING" id="39947.Q2QMG2"/>
<dbReference type="CarbonylDB" id="Q2QMG2"/>
<dbReference type="PaxDb" id="39947-Q2QMG2"/>
<dbReference type="EnsemblPlants" id="Os12t0605800-01">
    <property type="protein sequence ID" value="Os12t0605800-01"/>
    <property type="gene ID" value="Os12g0605800"/>
</dbReference>
<dbReference type="Gramene" id="Os12t0605800-01">
    <property type="protein sequence ID" value="Os12t0605800-01"/>
    <property type="gene ID" value="Os12g0605800"/>
</dbReference>
<dbReference type="KEGG" id="dosa:Os12g0605800"/>
<dbReference type="eggNOG" id="KOG0238">
    <property type="taxonomic scope" value="Eukaryota"/>
</dbReference>
<dbReference type="HOGENOM" id="CLU_000395_3_1_1"/>
<dbReference type="InParanoid" id="Q2QMG2"/>
<dbReference type="OMA" id="HIWHGPH"/>
<dbReference type="OrthoDB" id="196847at2759"/>
<dbReference type="UniPathway" id="UPA00363">
    <property type="reaction ID" value="UER00861"/>
</dbReference>
<dbReference type="Proteomes" id="UP000000763">
    <property type="component" value="Chromosome 12"/>
</dbReference>
<dbReference type="Proteomes" id="UP000007752">
    <property type="component" value="Chromosome 12"/>
</dbReference>
<dbReference type="Proteomes" id="UP000059680">
    <property type="component" value="Chromosome 12"/>
</dbReference>
<dbReference type="ExpressionAtlas" id="Q2QMG2">
    <property type="expression patterns" value="baseline and differential"/>
</dbReference>
<dbReference type="GO" id="GO:0005759">
    <property type="term" value="C:mitochondrial matrix"/>
    <property type="evidence" value="ECO:0007669"/>
    <property type="project" value="UniProtKB-SubCell"/>
</dbReference>
<dbReference type="GO" id="GO:0005739">
    <property type="term" value="C:mitochondrion"/>
    <property type="evidence" value="ECO:0000318"/>
    <property type="project" value="GO_Central"/>
</dbReference>
<dbReference type="GO" id="GO:0005524">
    <property type="term" value="F:ATP binding"/>
    <property type="evidence" value="ECO:0007669"/>
    <property type="project" value="UniProtKB-KW"/>
</dbReference>
<dbReference type="GO" id="GO:0046872">
    <property type="term" value="F:metal ion binding"/>
    <property type="evidence" value="ECO:0007669"/>
    <property type="project" value="UniProtKB-KW"/>
</dbReference>
<dbReference type="GO" id="GO:0004485">
    <property type="term" value="F:methylcrotonoyl-CoA carboxylase activity"/>
    <property type="evidence" value="ECO:0007669"/>
    <property type="project" value="UniProtKB-EC"/>
</dbReference>
<dbReference type="GO" id="GO:0006552">
    <property type="term" value="P:L-leucine catabolic process"/>
    <property type="evidence" value="ECO:0007669"/>
    <property type="project" value="UniProtKB-UniPathway"/>
</dbReference>
<dbReference type="CDD" id="cd06850">
    <property type="entry name" value="biotinyl_domain"/>
    <property type="match status" value="1"/>
</dbReference>
<dbReference type="FunFam" id="2.40.50.100:FF:000003">
    <property type="entry name" value="Acetyl-CoA carboxylase biotin carboxyl carrier protein"/>
    <property type="match status" value="1"/>
</dbReference>
<dbReference type="FunFam" id="3.30.1490.20:FF:000003">
    <property type="entry name" value="acetyl-CoA carboxylase isoform X1"/>
    <property type="match status" value="1"/>
</dbReference>
<dbReference type="FunFam" id="3.30.470.20:FF:000028">
    <property type="entry name" value="Methylcrotonoyl-CoA carboxylase subunit alpha, mitochondrial"/>
    <property type="match status" value="1"/>
</dbReference>
<dbReference type="FunFam" id="3.40.50.20:FF:000010">
    <property type="entry name" value="Propionyl-CoA carboxylase subunit alpha"/>
    <property type="match status" value="1"/>
</dbReference>
<dbReference type="Gene3D" id="2.40.50.100">
    <property type="match status" value="1"/>
</dbReference>
<dbReference type="Gene3D" id="3.30.470.20">
    <property type="entry name" value="ATP-grasp fold, B domain"/>
    <property type="match status" value="1"/>
</dbReference>
<dbReference type="InterPro" id="IPR011761">
    <property type="entry name" value="ATP-grasp"/>
</dbReference>
<dbReference type="InterPro" id="IPR005481">
    <property type="entry name" value="BC-like_N"/>
</dbReference>
<dbReference type="InterPro" id="IPR001882">
    <property type="entry name" value="Biotin_BS"/>
</dbReference>
<dbReference type="InterPro" id="IPR050856">
    <property type="entry name" value="Biotin_carboxylase_complex"/>
</dbReference>
<dbReference type="InterPro" id="IPR011764">
    <property type="entry name" value="Biotin_carboxylation_dom"/>
</dbReference>
<dbReference type="InterPro" id="IPR005482">
    <property type="entry name" value="Biotin_COase_C"/>
</dbReference>
<dbReference type="InterPro" id="IPR000089">
    <property type="entry name" value="Biotin_lipoyl"/>
</dbReference>
<dbReference type="InterPro" id="IPR005479">
    <property type="entry name" value="CbamoylP_synth_lsu-like_ATP-bd"/>
</dbReference>
<dbReference type="InterPro" id="IPR045774">
    <property type="entry name" value="MCCA_BT_dom"/>
</dbReference>
<dbReference type="InterPro" id="IPR016185">
    <property type="entry name" value="PreATP-grasp_dom_sf"/>
</dbReference>
<dbReference type="InterPro" id="IPR011054">
    <property type="entry name" value="Rudment_hybrid_motif"/>
</dbReference>
<dbReference type="InterPro" id="IPR011053">
    <property type="entry name" value="Single_hybrid_motif"/>
</dbReference>
<dbReference type="PANTHER" id="PTHR18866">
    <property type="entry name" value="CARBOXYLASE:PYRUVATE/ACETYL-COA/PROPIONYL-COA CARBOXYLASE"/>
    <property type="match status" value="1"/>
</dbReference>
<dbReference type="PANTHER" id="PTHR18866:SF33">
    <property type="entry name" value="METHYLCROTONOYL-COA CARBOXYLASE SUBUNIT ALPHA, MITOCHONDRIAL-RELATED"/>
    <property type="match status" value="1"/>
</dbReference>
<dbReference type="Pfam" id="PF02785">
    <property type="entry name" value="Biotin_carb_C"/>
    <property type="match status" value="1"/>
</dbReference>
<dbReference type="Pfam" id="PF00289">
    <property type="entry name" value="Biotin_carb_N"/>
    <property type="match status" value="1"/>
</dbReference>
<dbReference type="Pfam" id="PF00364">
    <property type="entry name" value="Biotin_lipoyl"/>
    <property type="match status" value="1"/>
</dbReference>
<dbReference type="Pfam" id="PF02786">
    <property type="entry name" value="CPSase_L_D2"/>
    <property type="match status" value="1"/>
</dbReference>
<dbReference type="Pfam" id="PF19331">
    <property type="entry name" value="MCCA_BT"/>
    <property type="match status" value="1"/>
</dbReference>
<dbReference type="SMART" id="SM00878">
    <property type="entry name" value="Biotin_carb_C"/>
    <property type="match status" value="1"/>
</dbReference>
<dbReference type="SUPFAM" id="SSF56059">
    <property type="entry name" value="Glutathione synthetase ATP-binding domain-like"/>
    <property type="match status" value="1"/>
</dbReference>
<dbReference type="SUPFAM" id="SSF52440">
    <property type="entry name" value="PreATP-grasp domain"/>
    <property type="match status" value="1"/>
</dbReference>
<dbReference type="SUPFAM" id="SSF51246">
    <property type="entry name" value="Rudiment single hybrid motif"/>
    <property type="match status" value="1"/>
</dbReference>
<dbReference type="SUPFAM" id="SSF51230">
    <property type="entry name" value="Single hybrid motif"/>
    <property type="match status" value="1"/>
</dbReference>
<dbReference type="PROSITE" id="PS50975">
    <property type="entry name" value="ATP_GRASP"/>
    <property type="match status" value="1"/>
</dbReference>
<dbReference type="PROSITE" id="PS50979">
    <property type="entry name" value="BC"/>
    <property type="match status" value="1"/>
</dbReference>
<dbReference type="PROSITE" id="PS00188">
    <property type="entry name" value="BIOTIN"/>
    <property type="match status" value="1"/>
</dbReference>
<dbReference type="PROSITE" id="PS50968">
    <property type="entry name" value="BIOTINYL_LIPOYL"/>
    <property type="match status" value="1"/>
</dbReference>
<dbReference type="PROSITE" id="PS00866">
    <property type="entry name" value="CPSASE_1"/>
    <property type="match status" value="1"/>
</dbReference>
<dbReference type="PROSITE" id="PS00867">
    <property type="entry name" value="CPSASE_2"/>
    <property type="match status" value="1"/>
</dbReference>
<reference key="1">
    <citation type="journal article" date="2005" name="BMC Biol.">
        <title>The sequence of rice chromosomes 11 and 12, rich in disease resistance genes and recent gene duplications.</title>
        <authorList>
            <consortium name="The rice chromosomes 11 and 12 sequencing consortia"/>
        </authorList>
    </citation>
    <scope>NUCLEOTIDE SEQUENCE [LARGE SCALE GENOMIC DNA]</scope>
    <source>
        <strain>cv. Nipponbare</strain>
    </source>
</reference>
<reference key="2">
    <citation type="journal article" date="2005" name="Nature">
        <title>The map-based sequence of the rice genome.</title>
        <authorList>
            <consortium name="International rice genome sequencing project (IRGSP)"/>
        </authorList>
    </citation>
    <scope>NUCLEOTIDE SEQUENCE [LARGE SCALE GENOMIC DNA]</scope>
    <source>
        <strain>cv. Nipponbare</strain>
    </source>
</reference>
<reference key="3">
    <citation type="journal article" date="2008" name="Nucleic Acids Res.">
        <title>The rice annotation project database (RAP-DB): 2008 update.</title>
        <authorList>
            <consortium name="The rice annotation project (RAP)"/>
        </authorList>
    </citation>
    <scope>GENOME REANNOTATION</scope>
    <source>
        <strain>cv. Nipponbare</strain>
    </source>
</reference>
<reference key="4">
    <citation type="journal article" date="2013" name="Rice">
        <title>Improvement of the Oryza sativa Nipponbare reference genome using next generation sequence and optical map data.</title>
        <authorList>
            <person name="Kawahara Y."/>
            <person name="de la Bastide M."/>
            <person name="Hamilton J.P."/>
            <person name="Kanamori H."/>
            <person name="McCombie W.R."/>
            <person name="Ouyang S."/>
            <person name="Schwartz D.C."/>
            <person name="Tanaka T."/>
            <person name="Wu J."/>
            <person name="Zhou S."/>
            <person name="Childs K.L."/>
            <person name="Davidson R.M."/>
            <person name="Lin H."/>
            <person name="Quesada-Ocampo L."/>
            <person name="Vaillancourt B."/>
            <person name="Sakai H."/>
            <person name="Lee S.S."/>
            <person name="Kim J."/>
            <person name="Numa H."/>
            <person name="Itoh T."/>
            <person name="Buell C.R."/>
            <person name="Matsumoto T."/>
        </authorList>
    </citation>
    <scope>GENOME REANNOTATION</scope>
    <source>
        <strain>cv. Nipponbare</strain>
    </source>
</reference>
<reference key="5">
    <citation type="journal article" date="2005" name="PLoS Biol.">
        <title>The genomes of Oryza sativa: a history of duplications.</title>
        <authorList>
            <person name="Yu J."/>
            <person name="Wang J."/>
            <person name="Lin W."/>
            <person name="Li S."/>
            <person name="Li H."/>
            <person name="Zhou J."/>
            <person name="Ni P."/>
            <person name="Dong W."/>
            <person name="Hu S."/>
            <person name="Zeng C."/>
            <person name="Zhang J."/>
            <person name="Zhang Y."/>
            <person name="Li R."/>
            <person name="Xu Z."/>
            <person name="Li S."/>
            <person name="Li X."/>
            <person name="Zheng H."/>
            <person name="Cong L."/>
            <person name="Lin L."/>
            <person name="Yin J."/>
            <person name="Geng J."/>
            <person name="Li G."/>
            <person name="Shi J."/>
            <person name="Liu J."/>
            <person name="Lv H."/>
            <person name="Li J."/>
            <person name="Wang J."/>
            <person name="Deng Y."/>
            <person name="Ran L."/>
            <person name="Shi X."/>
            <person name="Wang X."/>
            <person name="Wu Q."/>
            <person name="Li C."/>
            <person name="Ren X."/>
            <person name="Wang J."/>
            <person name="Wang X."/>
            <person name="Li D."/>
            <person name="Liu D."/>
            <person name="Zhang X."/>
            <person name="Ji Z."/>
            <person name="Zhao W."/>
            <person name="Sun Y."/>
            <person name="Zhang Z."/>
            <person name="Bao J."/>
            <person name="Han Y."/>
            <person name="Dong L."/>
            <person name="Ji J."/>
            <person name="Chen P."/>
            <person name="Wu S."/>
            <person name="Liu J."/>
            <person name="Xiao Y."/>
            <person name="Bu D."/>
            <person name="Tan J."/>
            <person name="Yang L."/>
            <person name="Ye C."/>
            <person name="Zhang J."/>
            <person name="Xu J."/>
            <person name="Zhou Y."/>
            <person name="Yu Y."/>
            <person name="Zhang B."/>
            <person name="Zhuang S."/>
            <person name="Wei H."/>
            <person name="Liu B."/>
            <person name="Lei M."/>
            <person name="Yu H."/>
            <person name="Li Y."/>
            <person name="Xu H."/>
            <person name="Wei S."/>
            <person name="He X."/>
            <person name="Fang L."/>
            <person name="Zhang Z."/>
            <person name="Zhang Y."/>
            <person name="Huang X."/>
            <person name="Su Z."/>
            <person name="Tong W."/>
            <person name="Li J."/>
            <person name="Tong Z."/>
            <person name="Li S."/>
            <person name="Ye J."/>
            <person name="Wang L."/>
            <person name="Fang L."/>
            <person name="Lei T."/>
            <person name="Chen C.-S."/>
            <person name="Chen H.-C."/>
            <person name="Xu Z."/>
            <person name="Li H."/>
            <person name="Huang H."/>
            <person name="Zhang F."/>
            <person name="Xu H."/>
            <person name="Li N."/>
            <person name="Zhao C."/>
            <person name="Li S."/>
            <person name="Dong L."/>
            <person name="Huang Y."/>
            <person name="Li L."/>
            <person name="Xi Y."/>
            <person name="Qi Q."/>
            <person name="Li W."/>
            <person name="Zhang B."/>
            <person name="Hu W."/>
            <person name="Zhang Y."/>
            <person name="Tian X."/>
            <person name="Jiao Y."/>
            <person name="Liang X."/>
            <person name="Jin J."/>
            <person name="Gao L."/>
            <person name="Zheng W."/>
            <person name="Hao B."/>
            <person name="Liu S.-M."/>
            <person name="Wang W."/>
            <person name="Yuan L."/>
            <person name="Cao M."/>
            <person name="McDermott J."/>
            <person name="Samudrala R."/>
            <person name="Wang J."/>
            <person name="Wong G.K.-S."/>
            <person name="Yang H."/>
        </authorList>
    </citation>
    <scope>NUCLEOTIDE SEQUENCE [LARGE SCALE GENOMIC DNA]</scope>
    <source>
        <strain>cv. Nipponbare</strain>
    </source>
</reference>
<reference key="6">
    <citation type="journal article" date="2003" name="Science">
        <title>Collection, mapping, and annotation of over 28,000 cDNA clones from japonica rice.</title>
        <authorList>
            <consortium name="The rice full-length cDNA consortium"/>
        </authorList>
    </citation>
    <scope>NUCLEOTIDE SEQUENCE [LARGE SCALE MRNA]</scope>
    <source>
        <strain>cv. Nipponbare</strain>
    </source>
</reference>
<reference key="7">
    <citation type="journal article" date="2001" name="J. Exp. Bot.">
        <title>Leaf senescence in rice plants: cloning and characterization of senescence up-regulated genes.</title>
        <authorList>
            <person name="Lee R.-H."/>
            <person name="Wang C.-H."/>
            <person name="Huang L.-T."/>
            <person name="Chen S.-C.G."/>
        </authorList>
    </citation>
    <scope>NUCLEOTIDE SEQUENCE [MRNA] OF 535-737</scope>
    <scope>INDUCTION</scope>
    <source>
        <strain>cv. Tainung 67</strain>
        <tissue>Leaf</tissue>
    </source>
</reference>
<comment type="function">
    <text evidence="1">Biotin-attachment subunit of the 3-methylcrotonyl-CoA carboxylase, an enzyme that catalyzes the conversion of 3-methylcrotonyl-CoA to 3-methylglutaconyl-CoA, a critical step for leucine and isovaleric acid catabolism.</text>
</comment>
<comment type="catalytic activity">
    <reaction>
        <text>3-methylbut-2-enoyl-CoA + hydrogencarbonate + ATP = 3-methyl-(2E)-glutaconyl-CoA + ADP + phosphate + H(+)</text>
        <dbReference type="Rhea" id="RHEA:13589"/>
        <dbReference type="ChEBI" id="CHEBI:15378"/>
        <dbReference type="ChEBI" id="CHEBI:17544"/>
        <dbReference type="ChEBI" id="CHEBI:30616"/>
        <dbReference type="ChEBI" id="CHEBI:43474"/>
        <dbReference type="ChEBI" id="CHEBI:57344"/>
        <dbReference type="ChEBI" id="CHEBI:57346"/>
        <dbReference type="ChEBI" id="CHEBI:456216"/>
        <dbReference type="EC" id="6.4.1.4"/>
    </reaction>
</comment>
<comment type="cofactor">
    <cofactor>
        <name>biotin</name>
        <dbReference type="ChEBI" id="CHEBI:57586"/>
    </cofactor>
</comment>
<comment type="cofactor">
    <cofactor evidence="1">
        <name>Mn(2+)</name>
        <dbReference type="ChEBI" id="CHEBI:29035"/>
    </cofactor>
    <text evidence="1">Binds 2 manganese ions per subunit.</text>
</comment>
<comment type="pathway">
    <text>Amino-acid degradation; L-leucine degradation; (S)-3-hydroxy-3-methylglutaryl-CoA from 3-isovaleryl-CoA: step 2/3.</text>
</comment>
<comment type="subunit">
    <text evidence="1">Probably a heterodimer composed of biotin-containing alpha subunits and beta subunits.</text>
</comment>
<comment type="subcellular location">
    <subcellularLocation>
        <location evidence="7">Mitochondrion matrix</location>
    </subcellularLocation>
</comment>
<comment type="induction">
    <text evidence="6">Induced during senescence.</text>
</comment>
<comment type="sequence caution" evidence="7">
    <conflict type="erroneous gene model prediction">
        <sequence resource="EMBL-CDS" id="ABA99832"/>
    </conflict>
</comment>
<organism>
    <name type="scientific">Oryza sativa subsp. japonica</name>
    <name type="common">Rice</name>
    <dbReference type="NCBI Taxonomy" id="39947"/>
    <lineage>
        <taxon>Eukaryota</taxon>
        <taxon>Viridiplantae</taxon>
        <taxon>Streptophyta</taxon>
        <taxon>Embryophyta</taxon>
        <taxon>Tracheophyta</taxon>
        <taxon>Spermatophyta</taxon>
        <taxon>Magnoliopsida</taxon>
        <taxon>Liliopsida</taxon>
        <taxon>Poales</taxon>
        <taxon>Poaceae</taxon>
        <taxon>BOP clade</taxon>
        <taxon>Oryzoideae</taxon>
        <taxon>Oryzeae</taxon>
        <taxon>Oryzinae</taxon>
        <taxon>Oryza</taxon>
        <taxon>Oryza sativa</taxon>
    </lineage>
</organism>
<name>MCCA_ORYSJ</name>
<proteinExistence type="evidence at transcript level"/>
<accession>Q2QMG2</accession>
<accession>A0A0P0YC98</accession>
<accession>Q0IM20</accession>
<accession>Q2QMG3</accession>
<accession>Q2QMG4</accession>
<accession>Q8W2G0</accession>
<sequence length="737" mass="80284">MASRLLLLPRRRSRHGGASLLLARLLSSSSSEAGGGGAVEKVLVANRGEIACRVMRTARRLGIPTVAVYSDADRGALHVRAADEAVRLGPPPARESYLNASAIVDAALRTGAKAIHPGYGFLSESADFAQLCKAEGLTFIGPPPSAIRDMGDKSASKRIMGAAGVPLVPGYHGAEQDIELLKLEANKIGYPVLIKPTHGGGGKGMRIVQRPEDFVDSVLSAQREAAASFGINTLLVEKYITQPRHIEVQIFGDQHGNVIHLYERDCSLQRRHQKIIEEAPAPNVTAQFRSHIGEAAVSAAKAVGYYSAGTVEFIVDTLSGEFYFMEMNTRLQVEHPVTEMIVGQDLVEWQIRIANGECLPLSQEQVPLNGHAFEARIYAENVPRGFLPATGTLHHYRPVPSTATVRVETGVEEGDTVSMHYDPMIAKLVVWGESRNAALVKLKNSLSNFQIAGLPTNVGFLQELAGHSAFEKGLVDTHFIERYQNDLLSTSTQALSGSHEAEELGAILAAACICKKDHVSSEVSLHDKKLSMWYAHPPFRMHHFAKRLMEFELDRELGGSSDDLLKLSVTYRSDGTYFVETEDGSSPGLDVKVDSRGDHDFRVDVGGLQTDVTLAFYSKDNCNHIHIWHGKHHHHYRQTLRAEQSPDDSSQPSASSEARSHPKGSVLAPMAGLVVKVLLKDGARVEEGQPVMVMEAMKMEHVVKAPCAGYVEGLKATAGQQVFDSSVLFTVKENKPN</sequence>
<feature type="transit peptide" description="Mitochondrion" evidence="2">
    <location>
        <begin position="1"/>
        <end position="33"/>
    </location>
</feature>
<feature type="chain" id="PRO_0000247483" description="Methylcrotonoyl-CoA carboxylase subunit alpha, mitochondrial">
    <location>
        <begin position="34"/>
        <end position="737"/>
    </location>
</feature>
<feature type="domain" description="Biotin carboxylation">
    <location>
        <begin position="38"/>
        <end position="485"/>
    </location>
</feature>
<feature type="domain" description="ATP-grasp" evidence="3">
    <location>
        <begin position="157"/>
        <end position="355"/>
    </location>
</feature>
<feature type="domain" description="Biotinyl-binding" evidence="4">
    <location>
        <begin position="656"/>
        <end position="732"/>
    </location>
</feature>
<feature type="region of interest" description="Disordered" evidence="5">
    <location>
        <begin position="636"/>
        <end position="665"/>
    </location>
</feature>
<feature type="compositionally biased region" description="Low complexity" evidence="5">
    <location>
        <begin position="647"/>
        <end position="657"/>
    </location>
</feature>
<feature type="active site" evidence="1">
    <location>
        <position position="330"/>
    </location>
</feature>
<feature type="binding site" evidence="1">
    <location>
        <position position="153"/>
    </location>
    <ligand>
        <name>ATP</name>
        <dbReference type="ChEBI" id="CHEBI:30616"/>
    </ligand>
</feature>
<feature type="binding site" evidence="3">
    <location>
        <begin position="185"/>
        <end position="246"/>
    </location>
    <ligand>
        <name>ATP</name>
        <dbReference type="ChEBI" id="CHEBI:30616"/>
    </ligand>
</feature>
<feature type="binding site" evidence="1">
    <location>
        <position position="237"/>
    </location>
    <ligand>
        <name>ATP</name>
        <dbReference type="ChEBI" id="CHEBI:30616"/>
    </ligand>
</feature>
<feature type="binding site" evidence="1">
    <location>
        <position position="272"/>
    </location>
    <ligand>
        <name>ATP</name>
        <dbReference type="ChEBI" id="CHEBI:30616"/>
    </ligand>
</feature>
<feature type="binding site" evidence="1">
    <location>
        <position position="312"/>
    </location>
    <ligand>
        <name>Mn(2+)</name>
        <dbReference type="ChEBI" id="CHEBI:29035"/>
        <label>1</label>
    </ligand>
</feature>
<feature type="binding site" evidence="1">
    <location>
        <position position="326"/>
    </location>
    <ligand>
        <name>Mn(2+)</name>
        <dbReference type="ChEBI" id="CHEBI:29035"/>
        <label>1</label>
    </ligand>
</feature>
<feature type="binding site" evidence="1">
    <location>
        <position position="326"/>
    </location>
    <ligand>
        <name>Mn(2+)</name>
        <dbReference type="ChEBI" id="CHEBI:29035"/>
        <label>2</label>
    </ligand>
</feature>
<feature type="binding site" evidence="1">
    <location>
        <position position="328"/>
    </location>
    <ligand>
        <name>Mn(2+)</name>
        <dbReference type="ChEBI" id="CHEBI:29035"/>
        <label>2</label>
    </ligand>
</feature>
<feature type="modified residue" description="N6-biotinyllysine" evidence="1 4">
    <location>
        <position position="698"/>
    </location>
</feature>
<evidence type="ECO:0000250" key="1"/>
<evidence type="ECO:0000255" key="2"/>
<evidence type="ECO:0000255" key="3">
    <source>
        <dbReference type="PROSITE-ProRule" id="PRU00409"/>
    </source>
</evidence>
<evidence type="ECO:0000255" key="4">
    <source>
        <dbReference type="PROSITE-ProRule" id="PRU01066"/>
    </source>
</evidence>
<evidence type="ECO:0000256" key="5">
    <source>
        <dbReference type="SAM" id="MobiDB-lite"/>
    </source>
</evidence>
<evidence type="ECO:0000269" key="6">
    <source>
    </source>
</evidence>
<evidence type="ECO:0000305" key="7"/>
<keyword id="KW-0067">ATP-binding</keyword>
<keyword id="KW-0092">Biotin</keyword>
<keyword id="KW-0436">Ligase</keyword>
<keyword id="KW-0464">Manganese</keyword>
<keyword id="KW-0479">Metal-binding</keyword>
<keyword id="KW-0496">Mitochondrion</keyword>
<keyword id="KW-0547">Nucleotide-binding</keyword>
<keyword id="KW-1185">Reference proteome</keyword>
<keyword id="KW-0809">Transit peptide</keyword>